<accession>Q504Y2</accession>
<accession>D6W5A0</accession>
<accession>Q96I09</accession>
<keyword id="KW-0067">ATP-binding</keyword>
<keyword id="KW-0217">Developmental protein</keyword>
<keyword id="KW-0221">Differentiation</keyword>
<keyword id="KW-0225">Disease variant</keyword>
<keyword id="KW-0325">Glycoprotein</keyword>
<keyword id="KW-0333">Golgi apparatus</keyword>
<keyword id="KW-0418">Kinase</keyword>
<keyword id="KW-0547">Nucleotide-binding</keyword>
<keyword id="KW-0892">Osteogenesis</keyword>
<keyword id="KW-0597">Phosphoprotein</keyword>
<keyword id="KW-0653">Protein transport</keyword>
<keyword id="KW-1267">Proteomics identification</keyword>
<keyword id="KW-1185">Reference proteome</keyword>
<keyword id="KW-0964">Secreted</keyword>
<keyword id="KW-0732">Signal</keyword>
<keyword id="KW-0808">Transferase</keyword>
<keyword id="KW-0813">Transport</keyword>
<keyword id="KW-0829">Tyrosine-protein kinase</keyword>
<reference key="1">
    <citation type="journal article" date="2005" name="Nature">
        <title>Generation and annotation of the DNA sequences of human chromosomes 2 and 4.</title>
        <authorList>
            <person name="Hillier L.W."/>
            <person name="Graves T.A."/>
            <person name="Fulton R.S."/>
            <person name="Fulton L.A."/>
            <person name="Pepin K.H."/>
            <person name="Minx P."/>
            <person name="Wagner-McPherson C."/>
            <person name="Layman D."/>
            <person name="Wylie K."/>
            <person name="Sekhon M."/>
            <person name="Becker M.C."/>
            <person name="Fewell G.A."/>
            <person name="Delehaunty K.D."/>
            <person name="Miner T.L."/>
            <person name="Nash W.E."/>
            <person name="Kremitzki C."/>
            <person name="Oddy L."/>
            <person name="Du H."/>
            <person name="Sun H."/>
            <person name="Bradshaw-Cordum H."/>
            <person name="Ali J."/>
            <person name="Carter J."/>
            <person name="Cordes M."/>
            <person name="Harris A."/>
            <person name="Isak A."/>
            <person name="van Brunt A."/>
            <person name="Nguyen C."/>
            <person name="Du F."/>
            <person name="Courtney L."/>
            <person name="Kalicki J."/>
            <person name="Ozersky P."/>
            <person name="Abbott S."/>
            <person name="Armstrong J."/>
            <person name="Belter E.A."/>
            <person name="Caruso L."/>
            <person name="Cedroni M."/>
            <person name="Cotton M."/>
            <person name="Davidson T."/>
            <person name="Desai A."/>
            <person name="Elliott G."/>
            <person name="Erb T."/>
            <person name="Fronick C."/>
            <person name="Gaige T."/>
            <person name="Haakenson W."/>
            <person name="Haglund K."/>
            <person name="Holmes A."/>
            <person name="Harkins R."/>
            <person name="Kim K."/>
            <person name="Kruchowski S.S."/>
            <person name="Strong C.M."/>
            <person name="Grewal N."/>
            <person name="Goyea E."/>
            <person name="Hou S."/>
            <person name="Levy A."/>
            <person name="Martinka S."/>
            <person name="Mead K."/>
            <person name="McLellan M.D."/>
            <person name="Meyer R."/>
            <person name="Randall-Maher J."/>
            <person name="Tomlinson C."/>
            <person name="Dauphin-Kohlberg S."/>
            <person name="Kozlowicz-Reilly A."/>
            <person name="Shah N."/>
            <person name="Swearengen-Shahid S."/>
            <person name="Snider J."/>
            <person name="Strong J.T."/>
            <person name="Thompson J."/>
            <person name="Yoakum M."/>
            <person name="Leonard S."/>
            <person name="Pearman C."/>
            <person name="Trani L."/>
            <person name="Radionenko M."/>
            <person name="Waligorski J.E."/>
            <person name="Wang C."/>
            <person name="Rock S.M."/>
            <person name="Tin-Wollam A.-M."/>
            <person name="Maupin R."/>
            <person name="Latreille P."/>
            <person name="Wendl M.C."/>
            <person name="Yang S.-P."/>
            <person name="Pohl C."/>
            <person name="Wallis J.W."/>
            <person name="Spieth J."/>
            <person name="Bieri T.A."/>
            <person name="Berkowicz N."/>
            <person name="Nelson J.O."/>
            <person name="Osborne J."/>
            <person name="Ding L."/>
            <person name="Meyer R."/>
            <person name="Sabo A."/>
            <person name="Shotland Y."/>
            <person name="Sinha P."/>
            <person name="Wohldmann P.E."/>
            <person name="Cook L.L."/>
            <person name="Hickenbotham M.T."/>
            <person name="Eldred J."/>
            <person name="Williams D."/>
            <person name="Jones T.A."/>
            <person name="She X."/>
            <person name="Ciccarelli F.D."/>
            <person name="Izaurralde E."/>
            <person name="Taylor J."/>
            <person name="Schmutz J."/>
            <person name="Myers R.M."/>
            <person name="Cox D.R."/>
            <person name="Huang X."/>
            <person name="McPherson J.D."/>
            <person name="Mardis E.R."/>
            <person name="Clifton S.W."/>
            <person name="Warren W.C."/>
            <person name="Chinwalla A.T."/>
            <person name="Eddy S.R."/>
            <person name="Marra M.A."/>
            <person name="Ovcharenko I."/>
            <person name="Furey T.S."/>
            <person name="Miller W."/>
            <person name="Eichler E.E."/>
            <person name="Bork P."/>
            <person name="Suyama M."/>
            <person name="Torrents D."/>
            <person name="Waterston R.H."/>
            <person name="Wilson R.K."/>
        </authorList>
    </citation>
    <scope>NUCLEOTIDE SEQUENCE [LARGE SCALE GENOMIC DNA]</scope>
</reference>
<reference key="2">
    <citation type="submission" date="2005-09" db="EMBL/GenBank/DDBJ databases">
        <authorList>
            <person name="Mural R.J."/>
            <person name="Istrail S."/>
            <person name="Sutton G.G."/>
            <person name="Florea L."/>
            <person name="Halpern A.L."/>
            <person name="Mobarry C.M."/>
            <person name="Lippert R."/>
            <person name="Walenz B."/>
            <person name="Shatkay H."/>
            <person name="Dew I."/>
            <person name="Miller J.R."/>
            <person name="Flanigan M.J."/>
            <person name="Edwards N.J."/>
            <person name="Bolanos R."/>
            <person name="Fasulo D."/>
            <person name="Halldorsson B.V."/>
            <person name="Hannenhalli S."/>
            <person name="Turner R."/>
            <person name="Yooseph S."/>
            <person name="Lu F."/>
            <person name="Nusskern D.R."/>
            <person name="Shue B.C."/>
            <person name="Zheng X.H."/>
            <person name="Zhong F."/>
            <person name="Delcher A.L."/>
            <person name="Huson D.H."/>
            <person name="Kravitz S.A."/>
            <person name="Mouchard L."/>
            <person name="Reinert K."/>
            <person name="Remington K.A."/>
            <person name="Clark A.G."/>
            <person name="Waterman M.S."/>
            <person name="Eichler E.E."/>
            <person name="Adams M.D."/>
            <person name="Hunkapiller M.W."/>
            <person name="Myers E.W."/>
            <person name="Venter J.C."/>
        </authorList>
    </citation>
    <scope>NUCLEOTIDE SEQUENCE [LARGE SCALE GENOMIC DNA]</scope>
</reference>
<reference key="3">
    <citation type="journal article" date="2004" name="Genome Res.">
        <title>The status, quality, and expansion of the NIH full-length cDNA project: the Mammalian Gene Collection (MGC).</title>
        <authorList>
            <consortium name="The MGC Project Team"/>
        </authorList>
    </citation>
    <scope>NUCLEOTIDE SEQUENCE [LARGE SCALE MRNA] OF 129-493</scope>
    <source>
        <tissue>Muscle</tissue>
    </source>
</reference>
<reference key="4">
    <citation type="journal article" date="2002" name="Science">
        <title>The protein kinase complement of the human genome.</title>
        <authorList>
            <person name="Manning G."/>
            <person name="Whyte D.B."/>
            <person name="Martinez R."/>
            <person name="Hunter T."/>
            <person name="Sudarsanam S."/>
        </authorList>
    </citation>
    <scope>IDENTIFICATION</scope>
</reference>
<reference key="5">
    <citation type="journal article" date="2014" name="Cell">
        <title>A secreted tyrosine kinase acts in the extracellular environment.</title>
        <authorList>
            <person name="Bordoli M.R."/>
            <person name="Yum J."/>
            <person name="Breitkopf S.B."/>
            <person name="Thon J.N."/>
            <person name="Italiano J.E. Jr."/>
            <person name="Xiao J."/>
            <person name="Worby C."/>
            <person name="Wong S.K."/>
            <person name="Lin G."/>
            <person name="Edenius M."/>
            <person name="Keller T.L."/>
            <person name="Asara J.M."/>
            <person name="Dixon J.E."/>
            <person name="Yeo C.Y."/>
            <person name="Whitman M."/>
        </authorList>
    </citation>
    <scope>FUNCTION</scope>
    <scope>CATALYTIC ACTIVITY</scope>
    <scope>SUBCELLULAR LOCATION</scope>
    <scope>TISSUE SPECIFICITY</scope>
</reference>
<reference key="6">
    <citation type="journal article" date="2019" name="J. Med. Genet.">
        <title>Biallelic disruption of PKDCC is associated with a skeletal disorder characterised by rhizomelic shortening of extremities and dysmorphic features.</title>
        <authorList>
            <person name="Sajan S.A."/>
            <person name="Ganesh J."/>
            <person name="Shinde D.N."/>
            <person name="Powis Z."/>
            <person name="Scarano M.I."/>
            <person name="Stone J."/>
            <person name="Winter S."/>
            <person name="Tang S."/>
        </authorList>
    </citation>
    <scope>INVOLVEMENT IN RLSDF</scope>
    <scope>VARIANT RLSDF 217-TYR--GLY-493 DEL</scope>
</reference>
<dbReference type="EC" id="2.7.10.2" evidence="5"/>
<dbReference type="EMBL" id="AC013480">
    <property type="status" value="NOT_ANNOTATED_CDS"/>
    <property type="molecule type" value="Genomic_DNA"/>
</dbReference>
<dbReference type="EMBL" id="CH471053">
    <property type="protein sequence ID" value="EAX00325.1"/>
    <property type="molecule type" value="Genomic_DNA"/>
</dbReference>
<dbReference type="EMBL" id="CH471053">
    <property type="protein sequence ID" value="EAX00326.1"/>
    <property type="molecule type" value="Genomic_DNA"/>
</dbReference>
<dbReference type="EMBL" id="BC007901">
    <property type="protein sequence ID" value="AAH07901.2"/>
    <property type="molecule type" value="mRNA"/>
</dbReference>
<dbReference type="EMBL" id="BC062988">
    <property type="protein sequence ID" value="AAH62988.1"/>
    <property type="molecule type" value="mRNA"/>
</dbReference>
<dbReference type="EMBL" id="BC094697">
    <property type="protein sequence ID" value="AAH94697.1"/>
    <property type="status" value="ALT_INIT"/>
    <property type="molecule type" value="mRNA"/>
</dbReference>
<dbReference type="EMBL" id="BC110513">
    <property type="protein sequence ID" value="AAI10514.1"/>
    <property type="status" value="ALT_INIT"/>
    <property type="molecule type" value="mRNA"/>
</dbReference>
<dbReference type="EMBL" id="BC110514">
    <property type="protein sequence ID" value="AAI10515.1"/>
    <property type="status" value="ALT_INIT"/>
    <property type="molecule type" value="mRNA"/>
</dbReference>
<dbReference type="CCDS" id="CCDS33186.2"/>
<dbReference type="RefSeq" id="NP_612379.2">
    <property type="nucleotide sequence ID" value="NM_138370.3"/>
</dbReference>
<dbReference type="SMR" id="Q504Y2"/>
<dbReference type="BioGRID" id="124837">
    <property type="interactions" value="17"/>
</dbReference>
<dbReference type="FunCoup" id="Q504Y2">
    <property type="interactions" value="243"/>
</dbReference>
<dbReference type="IntAct" id="Q504Y2">
    <property type="interactions" value="14"/>
</dbReference>
<dbReference type="STRING" id="9606.ENSP00000294964"/>
<dbReference type="GlyCosmos" id="Q504Y2">
    <property type="glycosylation" value="6 sites, No reported glycans"/>
</dbReference>
<dbReference type="GlyGen" id="Q504Y2">
    <property type="glycosylation" value="8 sites, 2 N-linked glycans (2 sites), 2 O-linked glycans (2 sites)"/>
</dbReference>
<dbReference type="iPTMnet" id="Q504Y2"/>
<dbReference type="PhosphoSitePlus" id="Q504Y2"/>
<dbReference type="BioMuta" id="PKDCC"/>
<dbReference type="DMDM" id="292495024"/>
<dbReference type="jPOST" id="Q504Y2"/>
<dbReference type="MassIVE" id="Q504Y2"/>
<dbReference type="PaxDb" id="9606-ENSP00000294964"/>
<dbReference type="PeptideAtlas" id="Q504Y2"/>
<dbReference type="ProteomicsDB" id="62416"/>
<dbReference type="Antibodypedia" id="29709">
    <property type="antibodies" value="67 antibodies from 21 providers"/>
</dbReference>
<dbReference type="DNASU" id="91461"/>
<dbReference type="Ensembl" id="ENST00000294964.6">
    <property type="protein sequence ID" value="ENSP00000294964.5"/>
    <property type="gene ID" value="ENSG00000162878.13"/>
</dbReference>
<dbReference type="GeneID" id="91461"/>
<dbReference type="KEGG" id="hsa:91461"/>
<dbReference type="MANE-Select" id="ENST00000294964.6">
    <property type="protein sequence ID" value="ENSP00000294964.5"/>
    <property type="RefSeq nucleotide sequence ID" value="NM_138370.3"/>
    <property type="RefSeq protein sequence ID" value="NP_612379.2"/>
</dbReference>
<dbReference type="UCSC" id="uc002rsg.4">
    <property type="organism name" value="human"/>
</dbReference>
<dbReference type="AGR" id="HGNC:25123"/>
<dbReference type="CTD" id="91461"/>
<dbReference type="DisGeNET" id="91461"/>
<dbReference type="GeneCards" id="PKDCC"/>
<dbReference type="HGNC" id="HGNC:25123">
    <property type="gene designation" value="PKDCC"/>
</dbReference>
<dbReference type="HPA" id="ENSG00000162878">
    <property type="expression patterns" value="Tissue enhanced (skeletal)"/>
</dbReference>
<dbReference type="MalaCards" id="PKDCC"/>
<dbReference type="MIM" id="614150">
    <property type="type" value="gene"/>
</dbReference>
<dbReference type="MIM" id="618821">
    <property type="type" value="phenotype"/>
</dbReference>
<dbReference type="neXtProt" id="NX_Q504Y2"/>
<dbReference type="OpenTargets" id="ENSG00000162878"/>
<dbReference type="PharmGKB" id="PA165697259"/>
<dbReference type="VEuPathDB" id="HostDB:ENSG00000162878"/>
<dbReference type="eggNOG" id="KOG1187">
    <property type="taxonomic scope" value="Eukaryota"/>
</dbReference>
<dbReference type="GeneTree" id="ENSGT00390000001205"/>
<dbReference type="HOGENOM" id="CLU_044025_1_0_1"/>
<dbReference type="InParanoid" id="Q504Y2"/>
<dbReference type="OMA" id="HEGCLLS"/>
<dbReference type="OrthoDB" id="4062651at2759"/>
<dbReference type="PAN-GO" id="Q504Y2">
    <property type="GO annotations" value="4 GO annotations based on evolutionary models"/>
</dbReference>
<dbReference type="PhylomeDB" id="Q504Y2"/>
<dbReference type="TreeFam" id="TF329248"/>
<dbReference type="PathwayCommons" id="Q504Y2"/>
<dbReference type="SignaLink" id="Q504Y2"/>
<dbReference type="BioGRID-ORCS" id="91461">
    <property type="hits" value="13 hits in 1152 CRISPR screens"/>
</dbReference>
<dbReference type="ChiTaRS" id="PKDCC">
    <property type="organism name" value="human"/>
</dbReference>
<dbReference type="GenomeRNAi" id="91461"/>
<dbReference type="Pharos" id="Q504Y2">
    <property type="development level" value="Tbio"/>
</dbReference>
<dbReference type="PRO" id="PR:Q504Y2"/>
<dbReference type="Proteomes" id="UP000005640">
    <property type="component" value="Chromosome 2"/>
</dbReference>
<dbReference type="RNAct" id="Q504Y2">
    <property type="molecule type" value="protein"/>
</dbReference>
<dbReference type="Bgee" id="ENSG00000162878">
    <property type="expression patterns" value="Expressed in right ovary and 167 other cell types or tissues"/>
</dbReference>
<dbReference type="ExpressionAtlas" id="Q504Y2">
    <property type="expression patterns" value="baseline and differential"/>
</dbReference>
<dbReference type="GO" id="GO:0005576">
    <property type="term" value="C:extracellular region"/>
    <property type="evidence" value="ECO:0000314"/>
    <property type="project" value="UniProtKB"/>
</dbReference>
<dbReference type="GO" id="GO:0005794">
    <property type="term" value="C:Golgi apparatus"/>
    <property type="evidence" value="ECO:0000250"/>
    <property type="project" value="UniProtKB"/>
</dbReference>
<dbReference type="GO" id="GO:0005524">
    <property type="term" value="F:ATP binding"/>
    <property type="evidence" value="ECO:0007669"/>
    <property type="project" value="UniProtKB-KW"/>
</dbReference>
<dbReference type="GO" id="GO:0004715">
    <property type="term" value="F:non-membrane spanning protein tyrosine kinase activity"/>
    <property type="evidence" value="ECO:0000314"/>
    <property type="project" value="UniProtKB"/>
</dbReference>
<dbReference type="GO" id="GO:0004672">
    <property type="term" value="F:protein kinase activity"/>
    <property type="evidence" value="ECO:0000250"/>
    <property type="project" value="UniProtKB"/>
</dbReference>
<dbReference type="GO" id="GO:0030282">
    <property type="term" value="P:bone mineralization"/>
    <property type="evidence" value="ECO:0007669"/>
    <property type="project" value="Ensembl"/>
</dbReference>
<dbReference type="GO" id="GO:0030154">
    <property type="term" value="P:cell differentiation"/>
    <property type="evidence" value="ECO:0007669"/>
    <property type="project" value="UniProtKB-KW"/>
</dbReference>
<dbReference type="GO" id="GO:0048566">
    <property type="term" value="P:embryonic digestive tract development"/>
    <property type="evidence" value="ECO:0000250"/>
    <property type="project" value="UniProtKB"/>
</dbReference>
<dbReference type="GO" id="GO:0035108">
    <property type="term" value="P:limb morphogenesis"/>
    <property type="evidence" value="ECO:0007669"/>
    <property type="project" value="Ensembl"/>
</dbReference>
<dbReference type="GO" id="GO:0048286">
    <property type="term" value="P:lung alveolus development"/>
    <property type="evidence" value="ECO:0000250"/>
    <property type="project" value="UniProtKB"/>
</dbReference>
<dbReference type="GO" id="GO:0035264">
    <property type="term" value="P:multicellular organism growth"/>
    <property type="evidence" value="ECO:0007669"/>
    <property type="project" value="Ensembl"/>
</dbReference>
<dbReference type="GO" id="GO:0042997">
    <property type="term" value="P:negative regulation of Golgi to plasma membrane protein transport"/>
    <property type="evidence" value="ECO:0000250"/>
    <property type="project" value="UniProtKB"/>
</dbReference>
<dbReference type="GO" id="GO:0018108">
    <property type="term" value="P:peptidyl-tyrosine phosphorylation"/>
    <property type="evidence" value="ECO:0000314"/>
    <property type="project" value="UniProtKB"/>
</dbReference>
<dbReference type="GO" id="GO:0030501">
    <property type="term" value="P:positive regulation of bone mineralization"/>
    <property type="evidence" value="ECO:0000250"/>
    <property type="project" value="UniProtKB"/>
</dbReference>
<dbReference type="GO" id="GO:0032332">
    <property type="term" value="P:positive regulation of chondrocyte differentiation"/>
    <property type="evidence" value="ECO:0000250"/>
    <property type="project" value="UniProtKB"/>
</dbReference>
<dbReference type="GO" id="GO:0015031">
    <property type="term" value="P:protein transport"/>
    <property type="evidence" value="ECO:0007669"/>
    <property type="project" value="UniProtKB-KW"/>
</dbReference>
<dbReference type="GO" id="GO:0060021">
    <property type="term" value="P:roof of mouth development"/>
    <property type="evidence" value="ECO:0000250"/>
    <property type="project" value="UniProtKB"/>
</dbReference>
<dbReference type="GO" id="GO:0001501">
    <property type="term" value="P:skeletal system development"/>
    <property type="evidence" value="ECO:0000315"/>
    <property type="project" value="UniProtKB"/>
</dbReference>
<dbReference type="FunFam" id="1.10.510.10:FF:000552">
    <property type="entry name" value="extracellular tyrosine-protein kinase PKDCC isoform X5"/>
    <property type="match status" value="1"/>
</dbReference>
<dbReference type="Gene3D" id="1.10.510.10">
    <property type="entry name" value="Transferase(Phosphotransferase) domain 1"/>
    <property type="match status" value="1"/>
</dbReference>
<dbReference type="InterPro" id="IPR022049">
    <property type="entry name" value="FAM69_kinase_dom"/>
</dbReference>
<dbReference type="InterPro" id="IPR011009">
    <property type="entry name" value="Kinase-like_dom_sf"/>
</dbReference>
<dbReference type="InterPro" id="IPR042983">
    <property type="entry name" value="PKDCC"/>
</dbReference>
<dbReference type="InterPro" id="IPR000719">
    <property type="entry name" value="Prot_kinase_dom"/>
</dbReference>
<dbReference type="PANTHER" id="PTHR46448:SF3">
    <property type="entry name" value="EXTRACELLULAR TYROSINE-PROTEIN KINASE PKDCC"/>
    <property type="match status" value="1"/>
</dbReference>
<dbReference type="PANTHER" id="PTHR46448">
    <property type="entry name" value="PROTEIN KINASE DOMAIN-CONTAINING PROTEIN"/>
    <property type="match status" value="1"/>
</dbReference>
<dbReference type="Pfam" id="PF12260">
    <property type="entry name" value="PIP49_C"/>
    <property type="match status" value="1"/>
</dbReference>
<dbReference type="SUPFAM" id="SSF56112">
    <property type="entry name" value="Protein kinase-like (PK-like)"/>
    <property type="match status" value="1"/>
</dbReference>
<dbReference type="PROSITE" id="PS50011">
    <property type="entry name" value="PROTEIN_KINASE_DOM"/>
    <property type="match status" value="1"/>
</dbReference>
<gene>
    <name evidence="8" type="primary">PKDCC</name>
    <name type="synonym">SGK493</name>
    <name evidence="1" type="synonym">VLK</name>
</gene>
<sequence>MRRRRAAVAAGFCASFLLGSVLNVLFAPGSEPPRPGQSPEPSPAPGPGRRGGRGELARQIRARYEEVQRYSRGGPGPGAGRPERRRLMDLAPGGPGLPRPRPPWARPLSDGAPGWPPAPGPGSPGPGPRLGCAALRNVSGAQYMGSGYTKAVYRVRLPGGAAVALKAVDFSGHDLGSCVREFGVRRGCYRLAAHKLLKEMVLLERLRHPNVLQLYGYCYQDSEDIPDTLTTITELGAPVEMIQLLQTSWEDRFRICLSLGRLLHHLAHSPLGSVTLLDFRPRQFVLVDGELKVTDLDDARVEETPCAGSTDCILEFPARNFTLPCSAQGWCEGMNEKRNLYNAYRFFFTYLLPHSAPPSLRPLLDSIVNATGELAWGVDETLAQLEKVLHLYRSGQYLQNSTASSSTEYQCIPDSTIPQEDYRCWPSYHHGSCLLSVFNLAEAVDVCESHAQCRAFVVTNQTTWTGRQLVFFKTGWSQVVPDPNKTTYVKASG</sequence>
<feature type="signal peptide" evidence="2">
    <location>
        <begin position="1"/>
        <end position="32"/>
    </location>
</feature>
<feature type="chain" id="PRO_0000263010" description="Extracellular tyrosine-protein kinase PKDCC">
    <location>
        <begin position="33"/>
        <end position="493"/>
    </location>
</feature>
<feature type="domain" description="Protein kinase" evidence="3">
    <location>
        <begin position="138"/>
        <end position="493"/>
    </location>
</feature>
<feature type="region of interest" description="Disordered" evidence="4">
    <location>
        <begin position="28"/>
        <end position="128"/>
    </location>
</feature>
<feature type="compositionally biased region" description="Pro residues" evidence="4">
    <location>
        <begin position="30"/>
        <end position="46"/>
    </location>
</feature>
<feature type="compositionally biased region" description="Basic and acidic residues" evidence="4">
    <location>
        <begin position="52"/>
        <end position="69"/>
    </location>
</feature>
<feature type="compositionally biased region" description="Pro residues" evidence="4">
    <location>
        <begin position="95"/>
        <end position="105"/>
    </location>
</feature>
<feature type="compositionally biased region" description="Pro residues" evidence="4">
    <location>
        <begin position="114"/>
        <end position="127"/>
    </location>
</feature>
<feature type="active site" description="Proton acceptor" evidence="3">
    <location>
        <position position="278"/>
    </location>
</feature>
<feature type="binding site" evidence="3">
    <location>
        <begin position="144"/>
        <end position="152"/>
    </location>
    <ligand>
        <name>ATP</name>
        <dbReference type="ChEBI" id="CHEBI:30616"/>
    </ligand>
</feature>
<feature type="binding site" evidence="3">
    <location>
        <position position="166"/>
    </location>
    <ligand>
        <name>ATP</name>
        <dbReference type="ChEBI" id="CHEBI:30616"/>
    </ligand>
</feature>
<feature type="modified residue" description="Phosphotyrosine" evidence="1">
    <location>
        <position position="148"/>
    </location>
</feature>
<feature type="modified residue" description="Phosphoserine" evidence="1">
    <location>
        <position position="177"/>
    </location>
</feature>
<feature type="glycosylation site" description="N-linked (GlcNAc...) asparagine" evidence="2">
    <location>
        <position position="137"/>
    </location>
</feature>
<feature type="glycosylation site" description="N-linked (GlcNAc...) asparagine" evidence="2">
    <location>
        <position position="320"/>
    </location>
</feature>
<feature type="glycosylation site" description="N-linked (GlcNAc...) asparagine" evidence="2">
    <location>
        <position position="369"/>
    </location>
</feature>
<feature type="glycosylation site" description="N-linked (GlcNAc...) asparagine" evidence="2">
    <location>
        <position position="400"/>
    </location>
</feature>
<feature type="glycosylation site" description="N-linked (GlcNAc...) asparagine" evidence="2">
    <location>
        <position position="460"/>
    </location>
</feature>
<feature type="glycosylation site" description="N-linked (GlcNAc...) asparagine" evidence="2">
    <location>
        <position position="484"/>
    </location>
</feature>
<feature type="sequence variant" id="VAR_083938" description="In RLSDF." evidence="6">
    <location>
        <begin position="217"/>
        <end position="493"/>
    </location>
</feature>
<name>PKDCC_HUMAN</name>
<organism>
    <name type="scientific">Homo sapiens</name>
    <name type="common">Human</name>
    <dbReference type="NCBI Taxonomy" id="9606"/>
    <lineage>
        <taxon>Eukaryota</taxon>
        <taxon>Metazoa</taxon>
        <taxon>Chordata</taxon>
        <taxon>Craniata</taxon>
        <taxon>Vertebrata</taxon>
        <taxon>Euteleostomi</taxon>
        <taxon>Mammalia</taxon>
        <taxon>Eutheria</taxon>
        <taxon>Euarchontoglires</taxon>
        <taxon>Primates</taxon>
        <taxon>Haplorrhini</taxon>
        <taxon>Catarrhini</taxon>
        <taxon>Hominidae</taxon>
        <taxon>Homo</taxon>
    </lineage>
</organism>
<proteinExistence type="evidence at protein level"/>
<evidence type="ECO:0000250" key="1">
    <source>
        <dbReference type="UniProtKB" id="Q5RJI4"/>
    </source>
</evidence>
<evidence type="ECO:0000255" key="2"/>
<evidence type="ECO:0000255" key="3">
    <source>
        <dbReference type="PROSITE-ProRule" id="PRU00159"/>
    </source>
</evidence>
<evidence type="ECO:0000256" key="4">
    <source>
        <dbReference type="SAM" id="MobiDB-lite"/>
    </source>
</evidence>
<evidence type="ECO:0000269" key="5">
    <source>
    </source>
</evidence>
<evidence type="ECO:0000269" key="6">
    <source>
    </source>
</evidence>
<evidence type="ECO:0000305" key="7"/>
<evidence type="ECO:0000312" key="8">
    <source>
        <dbReference type="HGNC" id="HGNC:25123"/>
    </source>
</evidence>
<comment type="function">
    <text evidence="1 5">Secreted tyrosine-protein kinase that mediates phosphorylation of extracellular proteins and endogenous proteins in the secretory pathway, which is essential for patterning at organogenesis stages. Mediates phosphorylation of MMP1, MMP13, MMP14, MMP19 and ERP29 (PubMed:25171405). Probably plays a role in platelets: rapidly and quantitatively secreted from platelets in response to stimulation of platelet degranulation (PubMed:25171405). May also have serine/threonine protein kinase activity. Required for longitudinal bone growth through regulation of chondrocyte differentiation. May be indirectly involved in protein transport from the Golgi apparatus to the plasma membrane (By similarity).</text>
</comment>
<comment type="catalytic activity">
    <reaction evidence="5">
        <text>L-tyrosyl-[protein] + ATP = O-phospho-L-tyrosyl-[protein] + ADP + H(+)</text>
        <dbReference type="Rhea" id="RHEA:10596"/>
        <dbReference type="Rhea" id="RHEA-COMP:10136"/>
        <dbReference type="Rhea" id="RHEA-COMP:20101"/>
        <dbReference type="ChEBI" id="CHEBI:15378"/>
        <dbReference type="ChEBI" id="CHEBI:30616"/>
        <dbReference type="ChEBI" id="CHEBI:46858"/>
        <dbReference type="ChEBI" id="CHEBI:61978"/>
        <dbReference type="ChEBI" id="CHEBI:456216"/>
        <dbReference type="EC" id="2.7.10.2"/>
    </reaction>
    <physiologicalReaction direction="left-to-right" evidence="5">
        <dbReference type="Rhea" id="RHEA:10597"/>
    </physiologicalReaction>
</comment>
<comment type="subcellular location">
    <subcellularLocation>
        <location evidence="5">Secreted</location>
    </subcellularLocation>
    <subcellularLocation>
        <location evidence="1">Golgi apparatus</location>
    </subcellularLocation>
</comment>
<comment type="tissue specificity">
    <text evidence="5">Highly expressed in platelets.</text>
</comment>
<comment type="PTM">
    <text evidence="1">N-glycosylated.</text>
</comment>
<comment type="PTM">
    <text evidence="1">Phosphorylated on tyrosines; probably via autophosphorylation.</text>
</comment>
<comment type="disease" evidence="6">
    <disease id="DI-05792">
        <name>Rhizomelic limb shortening with dysmorphic features</name>
        <acronym>RLSDF</acronym>
        <description>An autosomal recessive skeletal dysplasia characterized by rhizomelic shortening of limbs as well as variable dysmorphic features, including macrocephaly, short neck, micrognathia, mild proptosis, downslanting palpebral fissures, depressed or broad nasal bridge and long philtrum.</description>
        <dbReference type="MIM" id="618821"/>
    </disease>
    <text>The disease is caused by variants affecting the gene represented in this entry.</text>
</comment>
<comment type="similarity">
    <text evidence="7">Belongs to the protein kinase superfamily.</text>
</comment>
<comment type="sequence caution" evidence="7">
    <conflict type="erroneous initiation">
        <sequence resource="EMBL-CDS" id="AAH94697"/>
    </conflict>
    <text>Truncated N-terminus.</text>
</comment>
<comment type="sequence caution" evidence="7">
    <conflict type="erroneous initiation">
        <sequence resource="EMBL-CDS" id="AAI10514"/>
    </conflict>
    <text>Truncated N-terminus.</text>
</comment>
<comment type="sequence caution" evidence="7">
    <conflict type="erroneous initiation">
        <sequence resource="EMBL-CDS" id="AAI10515"/>
    </conflict>
    <text>Truncated N-terminus.</text>
</comment>
<protein>
    <recommendedName>
        <fullName evidence="7">Extracellular tyrosine-protein kinase PKDCC</fullName>
        <ecNumber evidence="5">2.7.10.2</ecNumber>
    </recommendedName>
    <alternativeName>
        <fullName evidence="8">Protein kinase domain-containing protein, cytoplasmic</fullName>
    </alternativeName>
    <alternativeName>
        <fullName>Protein kinase-like protein SgK493</fullName>
    </alternativeName>
    <alternativeName>
        <fullName>Sugen kinase 493</fullName>
    </alternativeName>
    <alternativeName>
        <fullName evidence="1">Vertebrate lonesome kinase</fullName>
    </alternativeName>
</protein>